<evidence type="ECO:0000255" key="1">
    <source>
        <dbReference type="HAMAP-Rule" id="MF_00373"/>
    </source>
</evidence>
<evidence type="ECO:0000305" key="2"/>
<name>RL28_SALNS</name>
<reference key="1">
    <citation type="journal article" date="2011" name="J. Bacteriol.">
        <title>Comparative genomics of 28 Salmonella enterica isolates: evidence for CRISPR-mediated adaptive sublineage evolution.</title>
        <authorList>
            <person name="Fricke W.F."/>
            <person name="Mammel M.K."/>
            <person name="McDermott P.F."/>
            <person name="Tartera C."/>
            <person name="White D.G."/>
            <person name="Leclerc J.E."/>
            <person name="Ravel J."/>
            <person name="Cebula T.A."/>
        </authorList>
    </citation>
    <scope>NUCLEOTIDE SEQUENCE [LARGE SCALE GENOMIC DNA]</scope>
    <source>
        <strain>SL254</strain>
    </source>
</reference>
<sequence length="78" mass="9051">MSRVCQVTGKRPVTGNNRSHALNATKRRFLPNLHSHRFWVESEKRFVTLRVSAKGMRIIDKKGIETVLSELRARGEKY</sequence>
<proteinExistence type="inferred from homology"/>
<comment type="similarity">
    <text evidence="1">Belongs to the bacterial ribosomal protein bL28 family.</text>
</comment>
<protein>
    <recommendedName>
        <fullName evidence="1">Large ribosomal subunit protein bL28</fullName>
    </recommendedName>
    <alternativeName>
        <fullName evidence="2">50S ribosomal protein L28</fullName>
    </alternativeName>
</protein>
<organism>
    <name type="scientific">Salmonella newport (strain SL254)</name>
    <dbReference type="NCBI Taxonomy" id="423368"/>
    <lineage>
        <taxon>Bacteria</taxon>
        <taxon>Pseudomonadati</taxon>
        <taxon>Pseudomonadota</taxon>
        <taxon>Gammaproteobacteria</taxon>
        <taxon>Enterobacterales</taxon>
        <taxon>Enterobacteriaceae</taxon>
        <taxon>Salmonella</taxon>
    </lineage>
</organism>
<accession>B4SXD9</accession>
<gene>
    <name evidence="1" type="primary">rpmB</name>
    <name type="ordered locus">SNSL254_A4008</name>
</gene>
<keyword id="KW-0687">Ribonucleoprotein</keyword>
<keyword id="KW-0689">Ribosomal protein</keyword>
<dbReference type="EMBL" id="CP001113">
    <property type="protein sequence ID" value="ACF62418.1"/>
    <property type="molecule type" value="Genomic_DNA"/>
</dbReference>
<dbReference type="RefSeq" id="WP_001519051.1">
    <property type="nucleotide sequence ID" value="NZ_CCMR01000004.1"/>
</dbReference>
<dbReference type="SMR" id="B4SXD9"/>
<dbReference type="KEGG" id="see:SNSL254_A4008"/>
<dbReference type="HOGENOM" id="CLU_064548_3_1_6"/>
<dbReference type="Proteomes" id="UP000008824">
    <property type="component" value="Chromosome"/>
</dbReference>
<dbReference type="GO" id="GO:0022625">
    <property type="term" value="C:cytosolic large ribosomal subunit"/>
    <property type="evidence" value="ECO:0007669"/>
    <property type="project" value="TreeGrafter"/>
</dbReference>
<dbReference type="GO" id="GO:0003735">
    <property type="term" value="F:structural constituent of ribosome"/>
    <property type="evidence" value="ECO:0007669"/>
    <property type="project" value="InterPro"/>
</dbReference>
<dbReference type="GO" id="GO:0006412">
    <property type="term" value="P:translation"/>
    <property type="evidence" value="ECO:0007669"/>
    <property type="project" value="UniProtKB-UniRule"/>
</dbReference>
<dbReference type="FunFam" id="2.30.170.40:FF:000001">
    <property type="entry name" value="50S ribosomal protein L28"/>
    <property type="match status" value="1"/>
</dbReference>
<dbReference type="Gene3D" id="2.30.170.40">
    <property type="entry name" value="Ribosomal protein L28/L24"/>
    <property type="match status" value="1"/>
</dbReference>
<dbReference type="HAMAP" id="MF_00373">
    <property type="entry name" value="Ribosomal_bL28"/>
    <property type="match status" value="1"/>
</dbReference>
<dbReference type="InterPro" id="IPR026569">
    <property type="entry name" value="Ribosomal_bL28"/>
</dbReference>
<dbReference type="InterPro" id="IPR034704">
    <property type="entry name" value="Ribosomal_bL28/bL31-like_sf"/>
</dbReference>
<dbReference type="InterPro" id="IPR001383">
    <property type="entry name" value="Ribosomal_bL28_bact-type"/>
</dbReference>
<dbReference type="InterPro" id="IPR037147">
    <property type="entry name" value="Ribosomal_bL28_sf"/>
</dbReference>
<dbReference type="NCBIfam" id="TIGR00009">
    <property type="entry name" value="L28"/>
    <property type="match status" value="1"/>
</dbReference>
<dbReference type="PANTHER" id="PTHR13528">
    <property type="entry name" value="39S RIBOSOMAL PROTEIN L28, MITOCHONDRIAL"/>
    <property type="match status" value="1"/>
</dbReference>
<dbReference type="PANTHER" id="PTHR13528:SF2">
    <property type="entry name" value="LARGE RIBOSOMAL SUBUNIT PROTEIN BL28M"/>
    <property type="match status" value="1"/>
</dbReference>
<dbReference type="Pfam" id="PF00830">
    <property type="entry name" value="Ribosomal_L28"/>
    <property type="match status" value="1"/>
</dbReference>
<dbReference type="SUPFAM" id="SSF143800">
    <property type="entry name" value="L28p-like"/>
    <property type="match status" value="1"/>
</dbReference>
<feature type="chain" id="PRO_1000121685" description="Large ribosomal subunit protein bL28">
    <location>
        <begin position="1"/>
        <end position="78"/>
    </location>
</feature>